<accession>B1XQ35</accession>
<feature type="chain" id="PRO_1000097011" description="3-methyl-2-oxobutanoate hydroxymethyltransferase">
    <location>
        <begin position="1"/>
        <end position="262"/>
    </location>
</feature>
<feature type="active site" description="Proton acceptor" evidence="1">
    <location>
        <position position="182"/>
    </location>
</feature>
<feature type="binding site" evidence="1">
    <location>
        <begin position="44"/>
        <end position="45"/>
    </location>
    <ligand>
        <name>3-methyl-2-oxobutanoate</name>
        <dbReference type="ChEBI" id="CHEBI:11851"/>
    </ligand>
</feature>
<feature type="binding site" evidence="1">
    <location>
        <position position="44"/>
    </location>
    <ligand>
        <name>Mg(2+)</name>
        <dbReference type="ChEBI" id="CHEBI:18420"/>
    </ligand>
</feature>
<feature type="binding site" evidence="1">
    <location>
        <position position="83"/>
    </location>
    <ligand>
        <name>3-methyl-2-oxobutanoate</name>
        <dbReference type="ChEBI" id="CHEBI:11851"/>
    </ligand>
</feature>
<feature type="binding site" evidence="1">
    <location>
        <position position="83"/>
    </location>
    <ligand>
        <name>Mg(2+)</name>
        <dbReference type="ChEBI" id="CHEBI:18420"/>
    </ligand>
</feature>
<feature type="binding site" evidence="1">
    <location>
        <position position="113"/>
    </location>
    <ligand>
        <name>3-methyl-2-oxobutanoate</name>
        <dbReference type="ChEBI" id="CHEBI:11851"/>
    </ligand>
</feature>
<feature type="binding site" evidence="1">
    <location>
        <position position="115"/>
    </location>
    <ligand>
        <name>Mg(2+)</name>
        <dbReference type="ChEBI" id="CHEBI:18420"/>
    </ligand>
</feature>
<comment type="function">
    <text evidence="1">Catalyzes the reversible reaction in which hydroxymethyl group from 5,10-methylenetetrahydrofolate is transferred onto alpha-ketoisovalerate to form ketopantoate.</text>
</comment>
<comment type="catalytic activity">
    <reaction evidence="1">
        <text>3-methyl-2-oxobutanoate + (6R)-5,10-methylene-5,6,7,8-tetrahydrofolate + H2O = 2-dehydropantoate + (6S)-5,6,7,8-tetrahydrofolate</text>
        <dbReference type="Rhea" id="RHEA:11824"/>
        <dbReference type="ChEBI" id="CHEBI:11561"/>
        <dbReference type="ChEBI" id="CHEBI:11851"/>
        <dbReference type="ChEBI" id="CHEBI:15377"/>
        <dbReference type="ChEBI" id="CHEBI:15636"/>
        <dbReference type="ChEBI" id="CHEBI:57453"/>
        <dbReference type="EC" id="2.1.2.11"/>
    </reaction>
</comment>
<comment type="cofactor">
    <cofactor evidence="1">
        <name>Mg(2+)</name>
        <dbReference type="ChEBI" id="CHEBI:18420"/>
    </cofactor>
    <text evidence="1">Binds 1 Mg(2+) ion per subunit.</text>
</comment>
<comment type="pathway">
    <text evidence="1">Cofactor biosynthesis; (R)-pantothenate biosynthesis; (R)-pantoate from 3-methyl-2-oxobutanoate: step 1/2.</text>
</comment>
<comment type="subunit">
    <text evidence="1">Homodecamer; pentamer of dimers.</text>
</comment>
<comment type="subcellular location">
    <subcellularLocation>
        <location evidence="1">Cytoplasm</location>
    </subcellularLocation>
</comment>
<comment type="similarity">
    <text evidence="1">Belongs to the PanB family.</text>
</comment>
<sequence length="262" mass="28342">MRVTPRTLQNYKKTARPIVTLTAWDYAIARLVDQAGVDVILVGDSLAMVALGYENTLPVTLEAMIHHTQAVCRGVKNALVVSDLPFLTYQESLSQAIHTAGRILKETTAQAIKLEGGHPAMAETVERLTRLGVPVMGHVGLTPQSVHTLGYRQQGNTELEATRVIQEAIALEQAGAFAVVLEHIPATLAQTITEKLTIPTIGIGAGRHCDGQVLVTADLLGLSEKAPPFAKQYLDLDNLITNAVQRYSDDVRTQQFPPHLGS</sequence>
<organism>
    <name type="scientific">Picosynechococcus sp. (strain ATCC 27264 / PCC 7002 / PR-6)</name>
    <name type="common">Agmenellum quadruplicatum</name>
    <dbReference type="NCBI Taxonomy" id="32049"/>
    <lineage>
        <taxon>Bacteria</taxon>
        <taxon>Bacillati</taxon>
        <taxon>Cyanobacteriota</taxon>
        <taxon>Cyanophyceae</taxon>
        <taxon>Oscillatoriophycideae</taxon>
        <taxon>Chroococcales</taxon>
        <taxon>Geminocystaceae</taxon>
        <taxon>Picosynechococcus</taxon>
    </lineage>
</organism>
<keyword id="KW-0963">Cytoplasm</keyword>
<keyword id="KW-0460">Magnesium</keyword>
<keyword id="KW-0479">Metal-binding</keyword>
<keyword id="KW-0566">Pantothenate biosynthesis</keyword>
<keyword id="KW-1185">Reference proteome</keyword>
<keyword id="KW-0808">Transferase</keyword>
<gene>
    <name evidence="1" type="primary">panB</name>
    <name type="ordered locus">SYNPCC7002_A1829</name>
</gene>
<dbReference type="EC" id="2.1.2.11" evidence="1"/>
<dbReference type="EMBL" id="CP000951">
    <property type="protein sequence ID" value="ACA99817.1"/>
    <property type="molecule type" value="Genomic_DNA"/>
</dbReference>
<dbReference type="RefSeq" id="WP_012307440.1">
    <property type="nucleotide sequence ID" value="NZ_JAHHPU010000002.1"/>
</dbReference>
<dbReference type="SMR" id="B1XQ35"/>
<dbReference type="STRING" id="32049.SYNPCC7002_A1829"/>
<dbReference type="KEGG" id="syp:SYNPCC7002_A1829"/>
<dbReference type="eggNOG" id="COG0413">
    <property type="taxonomic scope" value="Bacteria"/>
</dbReference>
<dbReference type="HOGENOM" id="CLU_036645_1_0_3"/>
<dbReference type="UniPathway" id="UPA00028">
    <property type="reaction ID" value="UER00003"/>
</dbReference>
<dbReference type="Proteomes" id="UP000001688">
    <property type="component" value="Chromosome"/>
</dbReference>
<dbReference type="GO" id="GO:0005737">
    <property type="term" value="C:cytoplasm"/>
    <property type="evidence" value="ECO:0007669"/>
    <property type="project" value="UniProtKB-SubCell"/>
</dbReference>
<dbReference type="GO" id="GO:0003864">
    <property type="term" value="F:3-methyl-2-oxobutanoate hydroxymethyltransferase activity"/>
    <property type="evidence" value="ECO:0007669"/>
    <property type="project" value="UniProtKB-UniRule"/>
</dbReference>
<dbReference type="GO" id="GO:0000287">
    <property type="term" value="F:magnesium ion binding"/>
    <property type="evidence" value="ECO:0007669"/>
    <property type="project" value="TreeGrafter"/>
</dbReference>
<dbReference type="GO" id="GO:0015940">
    <property type="term" value="P:pantothenate biosynthetic process"/>
    <property type="evidence" value="ECO:0007669"/>
    <property type="project" value="UniProtKB-UniRule"/>
</dbReference>
<dbReference type="CDD" id="cd06557">
    <property type="entry name" value="KPHMT-like"/>
    <property type="match status" value="1"/>
</dbReference>
<dbReference type="FunFam" id="3.20.20.60:FF:000003">
    <property type="entry name" value="3-methyl-2-oxobutanoate hydroxymethyltransferase"/>
    <property type="match status" value="1"/>
</dbReference>
<dbReference type="Gene3D" id="3.20.20.60">
    <property type="entry name" value="Phosphoenolpyruvate-binding domains"/>
    <property type="match status" value="1"/>
</dbReference>
<dbReference type="HAMAP" id="MF_00156">
    <property type="entry name" value="PanB"/>
    <property type="match status" value="1"/>
</dbReference>
<dbReference type="InterPro" id="IPR003700">
    <property type="entry name" value="Pantoate_hydroxy_MeTrfase"/>
</dbReference>
<dbReference type="InterPro" id="IPR015813">
    <property type="entry name" value="Pyrv/PenolPyrv_kinase-like_dom"/>
</dbReference>
<dbReference type="InterPro" id="IPR040442">
    <property type="entry name" value="Pyrv_kinase-like_dom_sf"/>
</dbReference>
<dbReference type="NCBIfam" id="TIGR00222">
    <property type="entry name" value="panB"/>
    <property type="match status" value="1"/>
</dbReference>
<dbReference type="NCBIfam" id="NF001452">
    <property type="entry name" value="PRK00311.1"/>
    <property type="match status" value="1"/>
</dbReference>
<dbReference type="PANTHER" id="PTHR20881">
    <property type="entry name" value="3-METHYL-2-OXOBUTANOATE HYDROXYMETHYLTRANSFERASE"/>
    <property type="match status" value="1"/>
</dbReference>
<dbReference type="PANTHER" id="PTHR20881:SF0">
    <property type="entry name" value="3-METHYL-2-OXOBUTANOATE HYDROXYMETHYLTRANSFERASE"/>
    <property type="match status" value="1"/>
</dbReference>
<dbReference type="Pfam" id="PF02548">
    <property type="entry name" value="Pantoate_transf"/>
    <property type="match status" value="1"/>
</dbReference>
<dbReference type="PIRSF" id="PIRSF000388">
    <property type="entry name" value="Pantoate_hydroxy_MeTrfase"/>
    <property type="match status" value="1"/>
</dbReference>
<dbReference type="SUPFAM" id="SSF51621">
    <property type="entry name" value="Phosphoenolpyruvate/pyruvate domain"/>
    <property type="match status" value="1"/>
</dbReference>
<protein>
    <recommendedName>
        <fullName evidence="1">3-methyl-2-oxobutanoate hydroxymethyltransferase</fullName>
        <ecNumber evidence="1">2.1.2.11</ecNumber>
    </recommendedName>
    <alternativeName>
        <fullName evidence="1">Ketopantoate hydroxymethyltransferase</fullName>
        <shortName evidence="1">KPHMT</shortName>
    </alternativeName>
</protein>
<evidence type="ECO:0000255" key="1">
    <source>
        <dbReference type="HAMAP-Rule" id="MF_00156"/>
    </source>
</evidence>
<name>PANB_PICP2</name>
<reference key="1">
    <citation type="submission" date="2008-02" db="EMBL/GenBank/DDBJ databases">
        <title>Complete sequence of Synechococcus sp. PCC 7002.</title>
        <authorList>
            <person name="Li T."/>
            <person name="Zhao J."/>
            <person name="Zhao C."/>
            <person name="Liu Z."/>
            <person name="Zhao F."/>
            <person name="Marquardt J."/>
            <person name="Nomura C.T."/>
            <person name="Persson S."/>
            <person name="Detter J.C."/>
            <person name="Richardson P.M."/>
            <person name="Lanz C."/>
            <person name="Schuster S.C."/>
            <person name="Wang J."/>
            <person name="Li S."/>
            <person name="Huang X."/>
            <person name="Cai T."/>
            <person name="Yu Z."/>
            <person name="Luo J."/>
            <person name="Zhao J."/>
            <person name="Bryant D.A."/>
        </authorList>
    </citation>
    <scope>NUCLEOTIDE SEQUENCE [LARGE SCALE GENOMIC DNA]</scope>
    <source>
        <strain>ATCC 27264 / PCC 7002 / PR-6</strain>
    </source>
</reference>
<proteinExistence type="inferred from homology"/>